<dbReference type="EMBL" id="X66247">
    <property type="status" value="NOT_ANNOTATED_CDS"/>
    <property type="molecule type" value="Genomic_DNA"/>
</dbReference>
<dbReference type="EMBL" id="X78993">
    <property type="status" value="NOT_ANNOTATED_CDS"/>
    <property type="molecule type" value="Genomic_DNA"/>
</dbReference>
<dbReference type="EMBL" id="Z35981">
    <property type="protein sequence ID" value="CAA85070.1"/>
    <property type="molecule type" value="Genomic_DNA"/>
</dbReference>
<dbReference type="PIR" id="S45981">
    <property type="entry name" value="S45981"/>
</dbReference>
<dbReference type="DIP" id="DIP-798N"/>
<dbReference type="STRING" id="4932.YBR113W"/>
<dbReference type="PaxDb" id="4932-YBR113W"/>
<dbReference type="EnsemblFungi" id="YBR113W_mRNA">
    <property type="protein sequence ID" value="YBR113W"/>
    <property type="gene ID" value="YBR113W"/>
</dbReference>
<dbReference type="AGR" id="SGD:S000000317"/>
<dbReference type="SGD" id="S000000317">
    <property type="gene designation" value="YBR113W"/>
</dbReference>
<dbReference type="HOGENOM" id="CLU_1653527_0_0_1"/>
<dbReference type="GO" id="GO:0016020">
    <property type="term" value="C:membrane"/>
    <property type="evidence" value="ECO:0007669"/>
    <property type="project" value="UniProtKB-SubCell"/>
</dbReference>
<feature type="chain" id="PRO_0000202487" description="Putative uncharacterized membrane protein YBR113W">
    <location>
        <begin position="1"/>
        <end position="160"/>
    </location>
</feature>
<feature type="topological domain" description="Extracellular" evidence="1">
    <location>
        <begin position="1"/>
        <end position="33"/>
    </location>
</feature>
<feature type="transmembrane region" description="Helical" evidence="1">
    <location>
        <begin position="34"/>
        <end position="54"/>
    </location>
</feature>
<feature type="topological domain" description="Cytoplasmic" evidence="1">
    <location>
        <begin position="55"/>
        <end position="68"/>
    </location>
</feature>
<feature type="transmembrane region" description="Helical" evidence="1">
    <location>
        <begin position="69"/>
        <end position="89"/>
    </location>
</feature>
<feature type="topological domain" description="Extracellular" evidence="1">
    <location>
        <begin position="90"/>
        <end position="119"/>
    </location>
</feature>
<feature type="transmembrane region" description="Helical" evidence="1">
    <location>
        <begin position="120"/>
        <end position="140"/>
    </location>
</feature>
<feature type="topological domain" description="Cytoplasmic" evidence="1">
    <location>
        <begin position="141"/>
        <end position="160"/>
    </location>
</feature>
<comment type="subcellular location">
    <subcellularLocation>
        <location>Membrane</location>
        <topology>Multi-pass membrane protein</topology>
    </subcellularLocation>
</comment>
<comment type="miscellaneous">
    <text evidence="2">Partially overlaps CYC8.</text>
</comment>
<comment type="caution">
    <text evidence="3">Product of a dubious gene prediction unlikely to encode a functional protein. Because of that it is not part of the S.cerevisiae S288c complete/reference proteome set.</text>
</comment>
<sequence length="160" mass="18098">MPLRPCRHHQGFLPKKQWRAKFPQLIVLMGRVAAEELLPAVAVAAVVVAVVVAVERVVPLLFVHRPDSFFLIFFFQSCFVCCCCCCSCSTSLKAYSSEKEKQKYGKRGNGNTPLVQRLVTLSYLALLILVLSIELLTWFVKKQRTGNKKQKDKEKNALLL</sequence>
<keyword id="KW-0472">Membrane</keyword>
<keyword id="KW-0812">Transmembrane</keyword>
<keyword id="KW-1133">Transmembrane helix</keyword>
<accession>P38267</accession>
<evidence type="ECO:0000255" key="1"/>
<evidence type="ECO:0000305" key="2"/>
<evidence type="ECO:0000305" key="3">
    <source>
    </source>
</evidence>
<organism>
    <name type="scientific">Saccharomyces cerevisiae (strain ATCC 204508 / S288c)</name>
    <name type="common">Baker's yeast</name>
    <dbReference type="NCBI Taxonomy" id="559292"/>
    <lineage>
        <taxon>Eukaryota</taxon>
        <taxon>Fungi</taxon>
        <taxon>Dikarya</taxon>
        <taxon>Ascomycota</taxon>
        <taxon>Saccharomycotina</taxon>
        <taxon>Saccharomycetes</taxon>
        <taxon>Saccharomycetales</taxon>
        <taxon>Saccharomycetaceae</taxon>
        <taxon>Saccharomyces</taxon>
    </lineage>
</organism>
<gene>
    <name type="ordered locus">YBR113W</name>
    <name type="ORF">YBR0908E</name>
</gene>
<protein>
    <recommendedName>
        <fullName>Putative uncharacterized membrane protein YBR113W</fullName>
    </recommendedName>
</protein>
<name>YBW3_YEAST</name>
<reference key="1">
    <citation type="journal article" date="1992" name="Yeast">
        <title>Molecular analysis of yeast chromosome II between CMD1 and LYS2: the excision repair gene RAD16 located in this region belongs to a novel group of double-finger proteins.</title>
        <authorList>
            <person name="Mannhaupt G."/>
            <person name="Stucka R."/>
            <person name="Ehnle S."/>
            <person name="Vetter I."/>
            <person name="Feldmann H."/>
        </authorList>
    </citation>
    <scope>NUCLEOTIDE SEQUENCE [GENOMIC DNA]</scope>
    <source>
        <strain>ATCC 204508 / S288c</strain>
    </source>
</reference>
<reference key="2">
    <citation type="journal article" date="1994" name="Yeast">
        <title>Analysis of a 70 kb region on the right arm of yeast chromosome II.</title>
        <authorList>
            <person name="Mannhaupt G."/>
            <person name="Stucka R."/>
            <person name="Ehnle S."/>
            <person name="Vetter I."/>
            <person name="Feldmann H."/>
        </authorList>
    </citation>
    <scope>NUCLEOTIDE SEQUENCE [GENOMIC DNA]</scope>
    <source>
        <strain>ATCC 204508 / S288c</strain>
    </source>
</reference>
<reference key="3">
    <citation type="journal article" date="1994" name="EMBO J.">
        <title>Complete DNA sequence of yeast chromosome II.</title>
        <authorList>
            <person name="Feldmann H."/>
            <person name="Aigle M."/>
            <person name="Aljinovic G."/>
            <person name="Andre B."/>
            <person name="Baclet M.C."/>
            <person name="Barthe C."/>
            <person name="Baur A."/>
            <person name="Becam A.-M."/>
            <person name="Biteau N."/>
            <person name="Boles E."/>
            <person name="Brandt T."/>
            <person name="Brendel M."/>
            <person name="Brueckner M."/>
            <person name="Bussereau F."/>
            <person name="Christiansen C."/>
            <person name="Contreras R."/>
            <person name="Crouzet M."/>
            <person name="Cziepluch C."/>
            <person name="Demolis N."/>
            <person name="Delaveau T."/>
            <person name="Doignon F."/>
            <person name="Domdey H."/>
            <person name="Duesterhus S."/>
            <person name="Dubois E."/>
            <person name="Dujon B."/>
            <person name="El Bakkoury M."/>
            <person name="Entian K.-D."/>
            <person name="Feuermann M."/>
            <person name="Fiers W."/>
            <person name="Fobo G.M."/>
            <person name="Fritz C."/>
            <person name="Gassenhuber J."/>
            <person name="Glansdorff N."/>
            <person name="Goffeau A."/>
            <person name="Grivell L.A."/>
            <person name="de Haan M."/>
            <person name="Hein C."/>
            <person name="Herbert C.J."/>
            <person name="Hollenberg C.P."/>
            <person name="Holmstroem K."/>
            <person name="Jacq C."/>
            <person name="Jacquet M."/>
            <person name="Jauniaux J.-C."/>
            <person name="Jonniaux J.-L."/>
            <person name="Kallesoee T."/>
            <person name="Kiesau P."/>
            <person name="Kirchrath L."/>
            <person name="Koetter P."/>
            <person name="Korol S."/>
            <person name="Liebl S."/>
            <person name="Logghe M."/>
            <person name="Lohan A.J.E."/>
            <person name="Louis E.J."/>
            <person name="Li Z.Y."/>
            <person name="Maat M.J."/>
            <person name="Mallet L."/>
            <person name="Mannhaupt G."/>
            <person name="Messenguy F."/>
            <person name="Miosga T."/>
            <person name="Molemans F."/>
            <person name="Mueller S."/>
            <person name="Nasr F."/>
            <person name="Obermaier B."/>
            <person name="Perea J."/>
            <person name="Pierard A."/>
            <person name="Piravandi E."/>
            <person name="Pohl F.M."/>
            <person name="Pohl T.M."/>
            <person name="Potier S."/>
            <person name="Proft M."/>
            <person name="Purnelle B."/>
            <person name="Ramezani Rad M."/>
            <person name="Rieger M."/>
            <person name="Rose M."/>
            <person name="Schaaff-Gerstenschlaeger I."/>
            <person name="Scherens B."/>
            <person name="Schwarzlose C."/>
            <person name="Skala J."/>
            <person name="Slonimski P.P."/>
            <person name="Smits P.H.M."/>
            <person name="Souciet J.-L."/>
            <person name="Steensma H.Y."/>
            <person name="Stucka R."/>
            <person name="Urrestarazu L.A."/>
            <person name="van der Aart Q.J.M."/>
            <person name="Van Dyck L."/>
            <person name="Vassarotti A."/>
            <person name="Vetter I."/>
            <person name="Vierendeels F."/>
            <person name="Vissers S."/>
            <person name="Wagner G."/>
            <person name="de Wergifosse P."/>
            <person name="Wolfe K.H."/>
            <person name="Zagulski M."/>
            <person name="Zimmermann F.K."/>
            <person name="Mewes H.-W."/>
            <person name="Kleine K."/>
        </authorList>
    </citation>
    <scope>NUCLEOTIDE SEQUENCE [LARGE SCALE GENOMIC DNA]</scope>
    <source>
        <strain>ATCC 204508 / S288c</strain>
    </source>
</reference>
<reference key="4">
    <citation type="journal article" date="2014" name="G3 (Bethesda)">
        <title>The reference genome sequence of Saccharomyces cerevisiae: Then and now.</title>
        <authorList>
            <person name="Engel S.R."/>
            <person name="Dietrich F.S."/>
            <person name="Fisk D.G."/>
            <person name="Binkley G."/>
            <person name="Balakrishnan R."/>
            <person name="Costanzo M.C."/>
            <person name="Dwight S.S."/>
            <person name="Hitz B.C."/>
            <person name="Karra K."/>
            <person name="Nash R.S."/>
            <person name="Weng S."/>
            <person name="Wong E.D."/>
            <person name="Lloyd P."/>
            <person name="Skrzypek M.S."/>
            <person name="Miyasato S.R."/>
            <person name="Simison M."/>
            <person name="Cherry J.M."/>
        </authorList>
    </citation>
    <scope>GENOME REANNOTATION</scope>
    <source>
        <strain>ATCC 204508 / S288c</strain>
    </source>
</reference>
<reference key="5">
    <citation type="journal article" date="2006" name="Proc. Natl. Acad. Sci. U.S.A.">
        <title>A global topology map of the Saccharomyces cerevisiae membrane proteome.</title>
        <authorList>
            <person name="Kim H."/>
            <person name="Melen K."/>
            <person name="Oesterberg M."/>
            <person name="von Heijne G."/>
        </authorList>
    </citation>
    <scope>TOPOLOGY [LARGE SCALE ANALYSIS]</scope>
    <source>
        <strain>ATCC 208353 / W303-1A</strain>
    </source>
</reference>
<proteinExistence type="uncertain"/>